<accession>Q852Q2</accession>
<accession>Q0DGI1</accession>
<accession>Q9ZRJ1</accession>
<reference key="1">
    <citation type="journal article" date="1998" name="Mol. Gen. Genet.">
        <title>Rice has two distinct classes of protein kinase genes related to SNF1 of Saccharomyces cerevisiae, which are differently regulated in early seed development.</title>
        <authorList>
            <person name="Takano M."/>
            <person name="Kajiya-Kanegae H."/>
            <person name="Funatsuki H."/>
            <person name="Kikuchi S."/>
        </authorList>
    </citation>
    <scope>NUCLEOTIDE SEQUENCE [MRNA]</scope>
    <scope>CATALYTIC ACTIVITY</scope>
    <scope>TISSUE SPECIFICITY</scope>
    <scope>GENE FAMILY</scope>
    <scope>NOMENCLATURE</scope>
    <source>
        <strain>cv. Nohrin 8</strain>
    </source>
</reference>
<reference key="2">
    <citation type="journal article" date="2005" name="Plant Physiol. Biochem.">
        <title>Expressions of rice sucrose non-fermenting-1 related protein kinase 1 genes are differently regulated during the caryopsis development.</title>
        <authorList>
            <person name="Kanegae H."/>
            <person name="Miyoshi K."/>
            <person name="Hirose T."/>
            <person name="Tsuchimoto S."/>
            <person name="Mori M."/>
            <person name="Nagato Y."/>
            <person name="Takano M."/>
        </authorList>
    </citation>
    <scope>NUCLEOTIDE SEQUENCE [GENOMIC DNA]</scope>
    <scope>DEVELOPMENTAL STAGE</scope>
    <scope>TISSUE SPECIFICITY</scope>
    <scope>GENE FAMILY</scope>
    <source>
        <strain>cv. Nohrin 8</strain>
    </source>
</reference>
<reference key="3">
    <citation type="journal article" date="2005" name="Mol. Genet. Genomics">
        <title>A fine physical map of the rice chromosome 5.</title>
        <authorList>
            <person name="Cheng C.-H."/>
            <person name="Chung M.C."/>
            <person name="Liu S.-M."/>
            <person name="Chen S.-K."/>
            <person name="Kao F.Y."/>
            <person name="Lin S.-J."/>
            <person name="Hsiao S.-H."/>
            <person name="Tseng I.C."/>
            <person name="Hsing Y.-I.C."/>
            <person name="Wu H.-P."/>
            <person name="Chen C.-S."/>
            <person name="Shaw J.-F."/>
            <person name="Wu J."/>
            <person name="Matsumoto T."/>
            <person name="Sasaki T."/>
            <person name="Chen H.-C."/>
            <person name="Chow T.-Y."/>
        </authorList>
    </citation>
    <scope>NUCLEOTIDE SEQUENCE [LARGE SCALE GENOMIC DNA]</scope>
    <source>
        <strain>cv. Nipponbare</strain>
    </source>
</reference>
<reference key="4">
    <citation type="journal article" date="2005" name="Nature">
        <title>The map-based sequence of the rice genome.</title>
        <authorList>
            <consortium name="International rice genome sequencing project (IRGSP)"/>
        </authorList>
    </citation>
    <scope>NUCLEOTIDE SEQUENCE [LARGE SCALE GENOMIC DNA]</scope>
    <source>
        <strain>cv. Nipponbare</strain>
    </source>
</reference>
<reference key="5">
    <citation type="journal article" date="2008" name="Nucleic Acids Res.">
        <title>The rice annotation project database (RAP-DB): 2008 update.</title>
        <authorList>
            <consortium name="The rice annotation project (RAP)"/>
        </authorList>
    </citation>
    <scope>GENOME REANNOTATION</scope>
    <source>
        <strain>cv. Nipponbare</strain>
    </source>
</reference>
<reference key="6">
    <citation type="journal article" date="2013" name="Rice">
        <title>Improvement of the Oryza sativa Nipponbare reference genome using next generation sequence and optical map data.</title>
        <authorList>
            <person name="Kawahara Y."/>
            <person name="de la Bastide M."/>
            <person name="Hamilton J.P."/>
            <person name="Kanamori H."/>
            <person name="McCombie W.R."/>
            <person name="Ouyang S."/>
            <person name="Schwartz D.C."/>
            <person name="Tanaka T."/>
            <person name="Wu J."/>
            <person name="Zhou S."/>
            <person name="Childs K.L."/>
            <person name="Davidson R.M."/>
            <person name="Lin H."/>
            <person name="Quesada-Ocampo L."/>
            <person name="Vaillancourt B."/>
            <person name="Sakai H."/>
            <person name="Lee S.S."/>
            <person name="Kim J."/>
            <person name="Numa H."/>
            <person name="Itoh T."/>
            <person name="Buell C.R."/>
            <person name="Matsumoto T."/>
        </authorList>
    </citation>
    <scope>GENOME REANNOTATION</scope>
    <source>
        <strain>cv. Nipponbare</strain>
    </source>
</reference>
<reference key="7">
    <citation type="journal article" date="2003" name="Science">
        <title>Collection, mapping, and annotation of over 28,000 cDNA clones from japonica rice.</title>
        <authorList>
            <consortium name="The rice full-length cDNA consortium"/>
        </authorList>
    </citation>
    <scope>NUCLEOTIDE SEQUENCE [LARGE SCALE MRNA]</scope>
    <source>
        <strain>cv. Nipponbare</strain>
    </source>
</reference>
<reference key="8">
    <citation type="journal article" date="2007" name="Plant Cell">
        <title>The SnRK1A protein kinase plays a key role in sugar signaling during germination and seedling growth of rice.</title>
        <authorList>
            <person name="Lu C.-A."/>
            <person name="Lin C.-C."/>
            <person name="Lee K.-W."/>
            <person name="Chen J.-L."/>
            <person name="Huang L.-F."/>
            <person name="Ho S.-L."/>
            <person name="Liu H.-J."/>
            <person name="Hsing Y.-I."/>
            <person name="Yu S.-M."/>
        </authorList>
    </citation>
    <scope>FUNCTION</scope>
    <scope>DISRUPTION PHENOTYPE</scope>
    <scope>INDUCTION BY GLUCOSE STARVATION</scope>
    <source>
        <strain>cv. Tainung 67</strain>
    </source>
</reference>
<evidence type="ECO:0000250" key="1">
    <source>
        <dbReference type="UniProtKB" id="Q852Q1"/>
    </source>
</evidence>
<evidence type="ECO:0000255" key="2">
    <source>
        <dbReference type="PROSITE-ProRule" id="PRU00159"/>
    </source>
</evidence>
<evidence type="ECO:0000255" key="3">
    <source>
        <dbReference type="PROSITE-ProRule" id="PRU00212"/>
    </source>
</evidence>
<evidence type="ECO:0000255" key="4">
    <source>
        <dbReference type="PROSITE-ProRule" id="PRU00565"/>
    </source>
</evidence>
<evidence type="ECO:0000256" key="5">
    <source>
        <dbReference type="SAM" id="MobiDB-lite"/>
    </source>
</evidence>
<evidence type="ECO:0000269" key="6">
    <source>
    </source>
</evidence>
<evidence type="ECO:0000269" key="7">
    <source>
    </source>
</evidence>
<evidence type="ECO:0000269" key="8">
    <source>
    </source>
</evidence>
<evidence type="ECO:0000303" key="9">
    <source>
    </source>
</evidence>
<evidence type="ECO:0000303" key="10">
    <source>
    </source>
</evidence>
<evidence type="ECO:0000303" key="11">
    <source>
    </source>
</evidence>
<evidence type="ECO:0000305" key="12"/>
<evidence type="ECO:0000312" key="13">
    <source>
        <dbReference type="EMBL" id="AAS72352.1"/>
    </source>
</evidence>
<evidence type="ECO:0000312" key="14">
    <source>
        <dbReference type="EMBL" id="BAS95028.1"/>
    </source>
</evidence>
<protein>
    <recommendedName>
        <fullName evidence="11">Serine/threonine protein kinase OSK1</fullName>
        <shortName evidence="11">OsK1</shortName>
        <ecNumber evidence="8">2.7.11.1</ecNumber>
    </recommendedName>
    <alternativeName>
        <fullName evidence="10">SUCROSE NON-FERMENTING-1 related protein kinase 1A</fullName>
        <shortName evidence="10">SNF1-related kinase 1A</shortName>
        <shortName evidence="10">SnRK1A</shortName>
    </alternativeName>
</protein>
<name>OSK1_ORYSJ</name>
<sequence length="505" mass="57615">MEGAGRDGNPLGGYRIGKTLGIGSFGKVKIAEHILTGHKVAIKILNRRKIKSMEMEEKVKREIKILRLFMHPHIIRLYEVIDTPADIYVVMEYVKSGELFDYIVEKGRLQEEEARRFFQQIISGVEYCHRNMVVHRDLKPENLLLDSKCNVKIADFGLSNVMRDGHFLKTSCGSPNYAAPEVISGKLYAGPEVDVWSCGVILYALLCGTLPFDDENIPNLFKKIKGGIYTLPSHLSPLARDLIPRMLVVDPMKRITIREIREHQWFTVGLPRYLAVPPPDTAQQVKKLDDETLNDVINMGFDKNQLIESLHKRLQNEATVAYYLLLDNRLRTTSGYLGAEFHESMESSLAQVTPAETPNSATDHRQHGHMESPGFGLRHHFAADRKWALGLQSRAHPREIITEVLKALQELNVCWKKIGHYNMKCRWSPSFPSHESMMHNNHGFGAESAIIETDDSEKSTHTVKFEIQLYKTRDEKYLLDLQRVSGPQLLFLDLCSAFLTQLRVL</sequence>
<gene>
    <name evidence="9 11" type="primary">OSK1</name>
    <name evidence="10" type="synonym">SNRK1A</name>
    <name evidence="12" type="ordered locus">LOC_Os05g45420</name>
    <name evidence="14" type="ordered locus">Os05g0530500</name>
    <name evidence="13" type="ORF">OJ1131_E09.11</name>
    <name evidence="14" type="ORF">OSNPB_050530500</name>
</gene>
<organism>
    <name type="scientific">Oryza sativa subsp. japonica</name>
    <name type="common">Rice</name>
    <dbReference type="NCBI Taxonomy" id="39947"/>
    <lineage>
        <taxon>Eukaryota</taxon>
        <taxon>Viridiplantae</taxon>
        <taxon>Streptophyta</taxon>
        <taxon>Embryophyta</taxon>
        <taxon>Tracheophyta</taxon>
        <taxon>Spermatophyta</taxon>
        <taxon>Magnoliopsida</taxon>
        <taxon>Liliopsida</taxon>
        <taxon>Poales</taxon>
        <taxon>Poaceae</taxon>
        <taxon>BOP clade</taxon>
        <taxon>Oryzoideae</taxon>
        <taxon>Oryzeae</taxon>
        <taxon>Oryzinae</taxon>
        <taxon>Oryza</taxon>
        <taxon>Oryza sativa</taxon>
    </lineage>
</organism>
<proteinExistence type="evidence at protein level"/>
<feature type="chain" id="PRO_0000438038" description="Serine/threonine protein kinase OSK1">
    <location>
        <begin position="1"/>
        <end position="505"/>
    </location>
</feature>
<feature type="domain" description="Protein kinase" evidence="2">
    <location>
        <begin position="14"/>
        <end position="266"/>
    </location>
</feature>
<feature type="domain" description="UBA" evidence="3">
    <location>
        <begin position="287"/>
        <end position="327"/>
    </location>
</feature>
<feature type="domain" description="KA1" evidence="4">
    <location>
        <begin position="456"/>
        <end position="504"/>
    </location>
</feature>
<feature type="region of interest" description="Disordered" evidence="5">
    <location>
        <begin position="347"/>
        <end position="372"/>
    </location>
</feature>
<feature type="compositionally biased region" description="Polar residues" evidence="5">
    <location>
        <begin position="347"/>
        <end position="361"/>
    </location>
</feature>
<feature type="active site" description="Proton acceptor" evidence="2">
    <location>
        <position position="137"/>
    </location>
</feature>
<feature type="binding site" evidence="2">
    <location>
        <begin position="20"/>
        <end position="28"/>
    </location>
    <ligand>
        <name>ATP</name>
        <dbReference type="ChEBI" id="CHEBI:30616"/>
    </ligand>
</feature>
<feature type="binding site" evidence="2">
    <location>
        <position position="43"/>
    </location>
    <ligand>
        <name>ATP</name>
        <dbReference type="ChEBI" id="CHEBI:30616"/>
    </ligand>
</feature>
<dbReference type="EC" id="2.7.11.1" evidence="8"/>
<dbReference type="EMBL" id="D82039">
    <property type="protein sequence ID" value="BAA36298.1"/>
    <property type="molecule type" value="mRNA"/>
</dbReference>
<dbReference type="EMBL" id="AB101655">
    <property type="protein sequence ID" value="BAC56588.1"/>
    <property type="molecule type" value="Genomic_DNA"/>
</dbReference>
<dbReference type="EMBL" id="AC111015">
    <property type="protein sequence ID" value="AAS72352.1"/>
    <property type="molecule type" value="Genomic_DNA"/>
</dbReference>
<dbReference type="EMBL" id="AP008211">
    <property type="protein sequence ID" value="BAF18042.1"/>
    <property type="status" value="ALT_SEQ"/>
    <property type="molecule type" value="Genomic_DNA"/>
</dbReference>
<dbReference type="EMBL" id="AP014961">
    <property type="protein sequence ID" value="BAS95028.1"/>
    <property type="molecule type" value="Genomic_DNA"/>
</dbReference>
<dbReference type="EMBL" id="AK067158">
    <property type="protein sequence ID" value="BAG90292.1"/>
    <property type="molecule type" value="mRNA"/>
</dbReference>
<dbReference type="RefSeq" id="XP_015639849.1">
    <property type="nucleotide sequence ID" value="XM_015784363.1"/>
</dbReference>
<dbReference type="RefSeq" id="XP_015639850.1">
    <property type="nucleotide sequence ID" value="XM_015784364.1"/>
</dbReference>
<dbReference type="SMR" id="Q852Q2"/>
<dbReference type="FunCoup" id="Q852Q2">
    <property type="interactions" value="2783"/>
</dbReference>
<dbReference type="STRING" id="39947.Q852Q2"/>
<dbReference type="PaxDb" id="39947-Q852Q2"/>
<dbReference type="EnsemblPlants" id="Os05t0530500-02">
    <property type="protein sequence ID" value="Os05t0530500-02"/>
    <property type="gene ID" value="Os05g0530500"/>
</dbReference>
<dbReference type="Gramene" id="Os05t0530500-02">
    <property type="protein sequence ID" value="Os05t0530500-02"/>
    <property type="gene ID" value="Os05g0530500"/>
</dbReference>
<dbReference type="KEGG" id="dosa:Os05g0530500"/>
<dbReference type="eggNOG" id="KOG0583">
    <property type="taxonomic scope" value="Eukaryota"/>
</dbReference>
<dbReference type="HOGENOM" id="CLU_000288_59_3_1"/>
<dbReference type="InParanoid" id="Q852Q2"/>
<dbReference type="OMA" id="HVMTEVY"/>
<dbReference type="OrthoDB" id="193931at2759"/>
<dbReference type="Proteomes" id="UP000000763">
    <property type="component" value="Chromosome 5"/>
</dbReference>
<dbReference type="Proteomes" id="UP000059680">
    <property type="component" value="Chromosome 5"/>
</dbReference>
<dbReference type="ExpressionAtlas" id="Q852Q2">
    <property type="expression patterns" value="baseline and differential"/>
</dbReference>
<dbReference type="GO" id="GO:0005634">
    <property type="term" value="C:nucleus"/>
    <property type="evidence" value="ECO:0007669"/>
    <property type="project" value="UniProtKB-SubCell"/>
</dbReference>
<dbReference type="GO" id="GO:0005524">
    <property type="term" value="F:ATP binding"/>
    <property type="evidence" value="ECO:0007669"/>
    <property type="project" value="UniProtKB-KW"/>
</dbReference>
<dbReference type="GO" id="GO:0106310">
    <property type="term" value="F:protein serine kinase activity"/>
    <property type="evidence" value="ECO:0007669"/>
    <property type="project" value="RHEA"/>
</dbReference>
<dbReference type="GO" id="GO:0004674">
    <property type="term" value="F:protein serine/threonine kinase activity"/>
    <property type="evidence" value="ECO:0000318"/>
    <property type="project" value="GO_Central"/>
</dbReference>
<dbReference type="CDD" id="cd12122">
    <property type="entry name" value="AMPKA_C"/>
    <property type="match status" value="1"/>
</dbReference>
<dbReference type="CDD" id="cd14079">
    <property type="entry name" value="STKc_AMPK_alpha"/>
    <property type="match status" value="1"/>
</dbReference>
<dbReference type="CDD" id="cd14335">
    <property type="entry name" value="UBA_SnRK1_plant"/>
    <property type="match status" value="1"/>
</dbReference>
<dbReference type="FunFam" id="1.10.510.10:FF:000204">
    <property type="entry name" value="Non-specific serine/threonine protein kinase"/>
    <property type="match status" value="1"/>
</dbReference>
<dbReference type="FunFam" id="3.30.200.20:FF:000236">
    <property type="entry name" value="Non-specific serine/threonine protein kinase"/>
    <property type="match status" value="1"/>
</dbReference>
<dbReference type="FunFam" id="3.30.310.80:FF:000006">
    <property type="entry name" value="Non-specific serine/threonine protein kinase"/>
    <property type="match status" value="1"/>
</dbReference>
<dbReference type="Gene3D" id="3.30.310.80">
    <property type="entry name" value="Kinase associated domain 1, KA1"/>
    <property type="match status" value="1"/>
</dbReference>
<dbReference type="Gene3D" id="1.10.510.10">
    <property type="entry name" value="Transferase(Phosphotransferase) domain 1"/>
    <property type="match status" value="1"/>
</dbReference>
<dbReference type="InterPro" id="IPR028375">
    <property type="entry name" value="KA1/Ssp2_C"/>
</dbReference>
<dbReference type="InterPro" id="IPR001772">
    <property type="entry name" value="KA1_dom"/>
</dbReference>
<dbReference type="InterPro" id="IPR011009">
    <property type="entry name" value="Kinase-like_dom_sf"/>
</dbReference>
<dbReference type="InterPro" id="IPR000719">
    <property type="entry name" value="Prot_kinase_dom"/>
</dbReference>
<dbReference type="InterPro" id="IPR017441">
    <property type="entry name" value="Protein_kinase_ATP_BS"/>
</dbReference>
<dbReference type="InterPro" id="IPR008271">
    <property type="entry name" value="Ser/Thr_kinase_AS"/>
</dbReference>
<dbReference type="InterPro" id="IPR015940">
    <property type="entry name" value="UBA"/>
</dbReference>
<dbReference type="PANTHER" id="PTHR24346:SF82">
    <property type="entry name" value="KP78A-RELATED"/>
    <property type="match status" value="1"/>
</dbReference>
<dbReference type="PANTHER" id="PTHR24346">
    <property type="entry name" value="MAP/MICROTUBULE AFFINITY-REGULATING KINASE"/>
    <property type="match status" value="1"/>
</dbReference>
<dbReference type="Pfam" id="PF02149">
    <property type="entry name" value="KA1"/>
    <property type="match status" value="1"/>
</dbReference>
<dbReference type="Pfam" id="PF00069">
    <property type="entry name" value="Pkinase"/>
    <property type="match status" value="1"/>
</dbReference>
<dbReference type="Pfam" id="PF00627">
    <property type="entry name" value="UBA"/>
    <property type="match status" value="1"/>
</dbReference>
<dbReference type="SMART" id="SM00220">
    <property type="entry name" value="S_TKc"/>
    <property type="match status" value="1"/>
</dbReference>
<dbReference type="SMART" id="SM00165">
    <property type="entry name" value="UBA"/>
    <property type="match status" value="1"/>
</dbReference>
<dbReference type="SUPFAM" id="SSF103243">
    <property type="entry name" value="KA1-like"/>
    <property type="match status" value="1"/>
</dbReference>
<dbReference type="SUPFAM" id="SSF56112">
    <property type="entry name" value="Protein kinase-like (PK-like)"/>
    <property type="match status" value="1"/>
</dbReference>
<dbReference type="PROSITE" id="PS50032">
    <property type="entry name" value="KA1"/>
    <property type="match status" value="1"/>
</dbReference>
<dbReference type="PROSITE" id="PS00107">
    <property type="entry name" value="PROTEIN_KINASE_ATP"/>
    <property type="match status" value="1"/>
</dbReference>
<dbReference type="PROSITE" id="PS50011">
    <property type="entry name" value="PROTEIN_KINASE_DOM"/>
    <property type="match status" value="1"/>
</dbReference>
<dbReference type="PROSITE" id="PS00108">
    <property type="entry name" value="PROTEIN_KINASE_ST"/>
    <property type="match status" value="1"/>
</dbReference>
<dbReference type="PROSITE" id="PS50030">
    <property type="entry name" value="UBA"/>
    <property type="match status" value="1"/>
</dbReference>
<comment type="function">
    <text evidence="7">Serine/threonine-protein kinase involved in sugar signaling during germination and seedling growth. Negative regulators of sugar response complex (SRC) in alpha-amylase gene promoters, thus relieving SRC sugar repression in a MYBS1-dependent manner. Required for MYBS1 and AAMY3 accumulation under glucose starvation.</text>
</comment>
<comment type="catalytic activity">
    <reaction evidence="8">
        <text>L-seryl-[protein] + ATP = O-phospho-L-seryl-[protein] + ADP + H(+)</text>
        <dbReference type="Rhea" id="RHEA:17989"/>
        <dbReference type="Rhea" id="RHEA-COMP:9863"/>
        <dbReference type="Rhea" id="RHEA-COMP:11604"/>
        <dbReference type="ChEBI" id="CHEBI:15378"/>
        <dbReference type="ChEBI" id="CHEBI:29999"/>
        <dbReference type="ChEBI" id="CHEBI:30616"/>
        <dbReference type="ChEBI" id="CHEBI:83421"/>
        <dbReference type="ChEBI" id="CHEBI:456216"/>
        <dbReference type="EC" id="2.7.11.1"/>
    </reaction>
</comment>
<comment type="catalytic activity">
    <reaction evidence="8">
        <text>L-threonyl-[protein] + ATP = O-phospho-L-threonyl-[protein] + ADP + H(+)</text>
        <dbReference type="Rhea" id="RHEA:46608"/>
        <dbReference type="Rhea" id="RHEA-COMP:11060"/>
        <dbReference type="Rhea" id="RHEA-COMP:11605"/>
        <dbReference type="ChEBI" id="CHEBI:15378"/>
        <dbReference type="ChEBI" id="CHEBI:30013"/>
        <dbReference type="ChEBI" id="CHEBI:30616"/>
        <dbReference type="ChEBI" id="CHEBI:61977"/>
        <dbReference type="ChEBI" id="CHEBI:456216"/>
        <dbReference type="EC" id="2.7.11.1"/>
    </reaction>
</comment>
<comment type="subcellular location">
    <subcellularLocation>
        <location evidence="1">Nucleus</location>
    </subcellularLocation>
</comment>
<comment type="tissue specificity">
    <text evidence="6 8">Expressed in young roots, young shoots, flowers, and immature seeds (PubMed:9870704). Mostly expressed in leaf sheaths and roots, and to a lower extent, in germinating seeds, leaf blades and panicles (PubMed:16087344).</text>
</comment>
<comment type="developmental stage">
    <text evidence="6">Nearly restricted in the vascular tissues during the caryopsis development. Observed in maturating caryopsis 2 days after flowering (DAF).</text>
</comment>
<comment type="induction">
    <text evidence="7">By glucose starvation (at protein level).</text>
</comment>
<comment type="disruption phenotype">
    <text evidence="7">Reduced expression of MYBS1 and AAMY3 under glucose starvation. Accumulation of MYBS1 and AAMY3 in the presence of glucose. Retarded seed germination and seedling growth.</text>
</comment>
<comment type="similarity">
    <text evidence="2">Belongs to the protein kinase superfamily. Ser/Thr protein kinase family.</text>
</comment>
<comment type="sequence caution" evidence="12">
    <conflict type="erroneous gene model prediction">
        <sequence resource="EMBL-CDS" id="BAF18042"/>
    </conflict>
</comment>
<keyword id="KW-0067">ATP-binding</keyword>
<keyword id="KW-0418">Kinase</keyword>
<keyword id="KW-0547">Nucleotide-binding</keyword>
<keyword id="KW-0539">Nucleus</keyword>
<keyword id="KW-1185">Reference proteome</keyword>
<keyword id="KW-0723">Serine/threonine-protein kinase</keyword>
<keyword id="KW-0808">Transferase</keyword>